<gene>
    <name evidence="1" type="primary">murC</name>
    <name type="ordered locus">ML0915</name>
</gene>
<accession>P57994</accession>
<comment type="function">
    <text evidence="1">Cell wall formation.</text>
</comment>
<comment type="catalytic activity">
    <reaction evidence="1">
        <text>UDP-N-acetyl-alpha-D-muramate + L-alanine + ATP = UDP-N-acetyl-alpha-D-muramoyl-L-alanine + ADP + phosphate + H(+)</text>
        <dbReference type="Rhea" id="RHEA:23372"/>
        <dbReference type="ChEBI" id="CHEBI:15378"/>
        <dbReference type="ChEBI" id="CHEBI:30616"/>
        <dbReference type="ChEBI" id="CHEBI:43474"/>
        <dbReference type="ChEBI" id="CHEBI:57972"/>
        <dbReference type="ChEBI" id="CHEBI:70757"/>
        <dbReference type="ChEBI" id="CHEBI:83898"/>
        <dbReference type="ChEBI" id="CHEBI:456216"/>
        <dbReference type="EC" id="6.3.2.8"/>
    </reaction>
</comment>
<comment type="pathway">
    <text evidence="1">Cell wall biogenesis; peptidoglycan biosynthesis.</text>
</comment>
<comment type="subcellular location">
    <subcellularLocation>
        <location evidence="1">Cytoplasm</location>
    </subcellularLocation>
</comment>
<comment type="similarity">
    <text evidence="1">Belongs to the MurCDEF family.</text>
</comment>
<protein>
    <recommendedName>
        <fullName evidence="1">UDP-N-acetylmuramate--L-alanine ligase</fullName>
        <ecNumber evidence="1">6.3.2.8</ecNumber>
    </recommendedName>
    <alternativeName>
        <fullName evidence="1">UDP-N-acetylmuramoyl-L-alanine synthetase</fullName>
    </alternativeName>
</protein>
<sequence length="495" mass="51588">MNAGQLPPELQRVHMVGIGGSGMSGIARILLDRGGLVSGSDAKESRVVHALRARGALIRIGHDASLLDLLPGGATAVITIRTAIPKTNPELVEARRRGIPVLLRSAVLARLMDGCTTLMVAGTHGKTTTTSMLVVALQHCGCDPSFVVGGELAVVGTNAHHGLGACFVAEADESDGSLLEYTPNVAVVTNIDSDHLDFYGSVDAYIRVFDSFVERFALGGALVVCNDDPGAAALARRTAELGIRVLRYGSDDRIGETLAARLLSWEQQGTGAVAHIQLAGQPNSRVMRLPVPGRHMALNALGALLAAIEIGASTDEVLDGLAGFRGVRRRFELVGTSGVGQASNSLVRVFDDYAHHPTEISATLAAFRIMLEQSGGGRCIVVFQPHLYSRTKALSREFGRALSAADEVFIVGVNGAREQPLAGVSGASVAKHVSVPVRYIPDYSAVVIEVAAAAGPGDVIVTMGIGDVGLLGPEIVAALRVRANCNTPGCSGVLQ</sequence>
<organism>
    <name type="scientific">Mycobacterium leprae (strain TN)</name>
    <dbReference type="NCBI Taxonomy" id="272631"/>
    <lineage>
        <taxon>Bacteria</taxon>
        <taxon>Bacillati</taxon>
        <taxon>Actinomycetota</taxon>
        <taxon>Actinomycetes</taxon>
        <taxon>Mycobacteriales</taxon>
        <taxon>Mycobacteriaceae</taxon>
        <taxon>Mycobacterium</taxon>
    </lineage>
</organism>
<dbReference type="EC" id="6.3.2.8" evidence="1"/>
<dbReference type="EMBL" id="AL583920">
    <property type="protein sequence ID" value="CAC31296.1"/>
    <property type="molecule type" value="Genomic_DNA"/>
</dbReference>
<dbReference type="PIR" id="E87023">
    <property type="entry name" value="E87023"/>
</dbReference>
<dbReference type="RefSeq" id="NP_301698.1">
    <property type="nucleotide sequence ID" value="NC_002677.1"/>
</dbReference>
<dbReference type="RefSeq" id="WP_010908022.1">
    <property type="nucleotide sequence ID" value="NC_002677.1"/>
</dbReference>
<dbReference type="SMR" id="P57994"/>
<dbReference type="STRING" id="272631.gene:17574741"/>
<dbReference type="KEGG" id="mle:ML0915"/>
<dbReference type="PATRIC" id="fig|272631.5.peg.1658"/>
<dbReference type="Leproma" id="ML0915"/>
<dbReference type="eggNOG" id="COG0773">
    <property type="taxonomic scope" value="Bacteria"/>
</dbReference>
<dbReference type="HOGENOM" id="CLU_028104_2_1_11"/>
<dbReference type="OrthoDB" id="9804126at2"/>
<dbReference type="BRENDA" id="6.3.2.8">
    <property type="organism ID" value="3504"/>
</dbReference>
<dbReference type="UniPathway" id="UPA00219"/>
<dbReference type="Proteomes" id="UP000000806">
    <property type="component" value="Chromosome"/>
</dbReference>
<dbReference type="GO" id="GO:0005737">
    <property type="term" value="C:cytoplasm"/>
    <property type="evidence" value="ECO:0007669"/>
    <property type="project" value="UniProtKB-SubCell"/>
</dbReference>
<dbReference type="GO" id="GO:0005524">
    <property type="term" value="F:ATP binding"/>
    <property type="evidence" value="ECO:0007669"/>
    <property type="project" value="UniProtKB-UniRule"/>
</dbReference>
<dbReference type="GO" id="GO:0008763">
    <property type="term" value="F:UDP-N-acetylmuramate-L-alanine ligase activity"/>
    <property type="evidence" value="ECO:0007669"/>
    <property type="project" value="UniProtKB-UniRule"/>
</dbReference>
<dbReference type="GO" id="GO:0051301">
    <property type="term" value="P:cell division"/>
    <property type="evidence" value="ECO:0007669"/>
    <property type="project" value="UniProtKB-KW"/>
</dbReference>
<dbReference type="GO" id="GO:0071555">
    <property type="term" value="P:cell wall organization"/>
    <property type="evidence" value="ECO:0007669"/>
    <property type="project" value="UniProtKB-KW"/>
</dbReference>
<dbReference type="GO" id="GO:0009252">
    <property type="term" value="P:peptidoglycan biosynthetic process"/>
    <property type="evidence" value="ECO:0007669"/>
    <property type="project" value="UniProtKB-UniRule"/>
</dbReference>
<dbReference type="GO" id="GO:0008360">
    <property type="term" value="P:regulation of cell shape"/>
    <property type="evidence" value="ECO:0007669"/>
    <property type="project" value="UniProtKB-KW"/>
</dbReference>
<dbReference type="Gene3D" id="3.90.190.20">
    <property type="entry name" value="Mur ligase, C-terminal domain"/>
    <property type="match status" value="1"/>
</dbReference>
<dbReference type="Gene3D" id="3.40.1190.10">
    <property type="entry name" value="Mur-like, catalytic domain"/>
    <property type="match status" value="1"/>
</dbReference>
<dbReference type="Gene3D" id="3.40.50.720">
    <property type="entry name" value="NAD(P)-binding Rossmann-like Domain"/>
    <property type="match status" value="1"/>
</dbReference>
<dbReference type="HAMAP" id="MF_00046">
    <property type="entry name" value="MurC"/>
    <property type="match status" value="1"/>
</dbReference>
<dbReference type="InterPro" id="IPR036565">
    <property type="entry name" value="Mur-like_cat_sf"/>
</dbReference>
<dbReference type="InterPro" id="IPR004101">
    <property type="entry name" value="Mur_ligase_C"/>
</dbReference>
<dbReference type="InterPro" id="IPR036615">
    <property type="entry name" value="Mur_ligase_C_dom_sf"/>
</dbReference>
<dbReference type="InterPro" id="IPR013221">
    <property type="entry name" value="Mur_ligase_cen"/>
</dbReference>
<dbReference type="InterPro" id="IPR000713">
    <property type="entry name" value="Mur_ligase_N"/>
</dbReference>
<dbReference type="InterPro" id="IPR050061">
    <property type="entry name" value="MurCDEF_pg_biosynth"/>
</dbReference>
<dbReference type="InterPro" id="IPR005758">
    <property type="entry name" value="UDP-N-AcMur_Ala_ligase_MurC"/>
</dbReference>
<dbReference type="NCBIfam" id="TIGR01082">
    <property type="entry name" value="murC"/>
    <property type="match status" value="1"/>
</dbReference>
<dbReference type="PANTHER" id="PTHR43445:SF3">
    <property type="entry name" value="UDP-N-ACETYLMURAMATE--L-ALANINE LIGASE"/>
    <property type="match status" value="1"/>
</dbReference>
<dbReference type="PANTHER" id="PTHR43445">
    <property type="entry name" value="UDP-N-ACETYLMURAMATE--L-ALANINE LIGASE-RELATED"/>
    <property type="match status" value="1"/>
</dbReference>
<dbReference type="Pfam" id="PF01225">
    <property type="entry name" value="Mur_ligase"/>
    <property type="match status" value="1"/>
</dbReference>
<dbReference type="Pfam" id="PF02875">
    <property type="entry name" value="Mur_ligase_C"/>
    <property type="match status" value="1"/>
</dbReference>
<dbReference type="Pfam" id="PF08245">
    <property type="entry name" value="Mur_ligase_M"/>
    <property type="match status" value="1"/>
</dbReference>
<dbReference type="SUPFAM" id="SSF51984">
    <property type="entry name" value="MurCD N-terminal domain"/>
    <property type="match status" value="1"/>
</dbReference>
<dbReference type="SUPFAM" id="SSF53623">
    <property type="entry name" value="MurD-like peptide ligases, catalytic domain"/>
    <property type="match status" value="1"/>
</dbReference>
<dbReference type="SUPFAM" id="SSF53244">
    <property type="entry name" value="MurD-like peptide ligases, peptide-binding domain"/>
    <property type="match status" value="1"/>
</dbReference>
<keyword id="KW-0067">ATP-binding</keyword>
<keyword id="KW-0131">Cell cycle</keyword>
<keyword id="KW-0132">Cell division</keyword>
<keyword id="KW-0133">Cell shape</keyword>
<keyword id="KW-0961">Cell wall biogenesis/degradation</keyword>
<keyword id="KW-0963">Cytoplasm</keyword>
<keyword id="KW-0436">Ligase</keyword>
<keyword id="KW-0547">Nucleotide-binding</keyword>
<keyword id="KW-0573">Peptidoglycan synthesis</keyword>
<keyword id="KW-1185">Reference proteome</keyword>
<proteinExistence type="inferred from homology"/>
<name>MURC_MYCLE</name>
<evidence type="ECO:0000255" key="1">
    <source>
        <dbReference type="HAMAP-Rule" id="MF_00046"/>
    </source>
</evidence>
<reference key="1">
    <citation type="journal article" date="2001" name="Nature">
        <title>Massive gene decay in the leprosy bacillus.</title>
        <authorList>
            <person name="Cole S.T."/>
            <person name="Eiglmeier K."/>
            <person name="Parkhill J."/>
            <person name="James K.D."/>
            <person name="Thomson N.R."/>
            <person name="Wheeler P.R."/>
            <person name="Honore N."/>
            <person name="Garnier T."/>
            <person name="Churcher C.M."/>
            <person name="Harris D.E."/>
            <person name="Mungall K.L."/>
            <person name="Basham D."/>
            <person name="Brown D."/>
            <person name="Chillingworth T."/>
            <person name="Connor R."/>
            <person name="Davies R.M."/>
            <person name="Devlin K."/>
            <person name="Duthoy S."/>
            <person name="Feltwell T."/>
            <person name="Fraser A."/>
            <person name="Hamlin N."/>
            <person name="Holroyd S."/>
            <person name="Hornsby T."/>
            <person name="Jagels K."/>
            <person name="Lacroix C."/>
            <person name="Maclean J."/>
            <person name="Moule S."/>
            <person name="Murphy L.D."/>
            <person name="Oliver K."/>
            <person name="Quail M.A."/>
            <person name="Rajandream M.A."/>
            <person name="Rutherford K.M."/>
            <person name="Rutter S."/>
            <person name="Seeger K."/>
            <person name="Simon S."/>
            <person name="Simmonds M."/>
            <person name="Skelton J."/>
            <person name="Squares R."/>
            <person name="Squares S."/>
            <person name="Stevens K."/>
            <person name="Taylor K."/>
            <person name="Whitehead S."/>
            <person name="Woodward J.R."/>
            <person name="Barrell B.G."/>
        </authorList>
    </citation>
    <scope>NUCLEOTIDE SEQUENCE [LARGE SCALE GENOMIC DNA]</scope>
    <source>
        <strain>TN</strain>
    </source>
</reference>
<feature type="chain" id="PRO_0000182118" description="UDP-N-acetylmuramate--L-alanine ligase">
    <location>
        <begin position="1"/>
        <end position="495"/>
    </location>
</feature>
<feature type="binding site" evidence="1">
    <location>
        <begin position="122"/>
        <end position="128"/>
    </location>
    <ligand>
        <name>ATP</name>
        <dbReference type="ChEBI" id="CHEBI:30616"/>
    </ligand>
</feature>